<dbReference type="EC" id="2.3.2.27"/>
<dbReference type="EMBL" id="AB030190">
    <property type="protein sequence ID" value="BAA92754.1"/>
    <property type="status" value="ALT_SEQ"/>
    <property type="molecule type" value="mRNA"/>
</dbReference>
<dbReference type="EMBL" id="AK037991">
    <property type="protein sequence ID" value="BAC29916.1"/>
    <property type="status" value="ALT_SEQ"/>
    <property type="molecule type" value="mRNA"/>
</dbReference>
<dbReference type="EMBL" id="AK075944">
    <property type="protein sequence ID" value="BAC36073.1"/>
    <property type="molecule type" value="mRNA"/>
</dbReference>
<dbReference type="EMBL" id="AK076158">
    <property type="protein sequence ID" value="BAC36225.1"/>
    <property type="molecule type" value="mRNA"/>
</dbReference>
<dbReference type="EMBL" id="AK088973">
    <property type="protein sequence ID" value="BAC40679.1"/>
    <property type="status" value="ALT_SEQ"/>
    <property type="molecule type" value="mRNA"/>
</dbReference>
<dbReference type="EMBL" id="AL662809">
    <property type="status" value="NOT_ANNOTATED_CDS"/>
    <property type="molecule type" value="Genomic_DNA"/>
</dbReference>
<dbReference type="EMBL" id="BC072613">
    <property type="protein sequence ID" value="AAH72613.1"/>
    <property type="molecule type" value="mRNA"/>
</dbReference>
<dbReference type="EMBL" id="BC096522">
    <property type="protein sequence ID" value="AAH96522.1"/>
    <property type="status" value="ALT_SEQ"/>
    <property type="molecule type" value="mRNA"/>
</dbReference>
<dbReference type="CCDS" id="CCDS78953.1"/>
<dbReference type="RefSeq" id="NP_071868.2">
    <property type="nucleotide sequence ID" value="NM_022423.3"/>
</dbReference>
<dbReference type="SMR" id="Q8BFX1"/>
<dbReference type="FunCoup" id="Q8BFX1">
    <property type="interactions" value="957"/>
</dbReference>
<dbReference type="STRING" id="10090.ENSMUSP00000091703"/>
<dbReference type="iPTMnet" id="Q8BFX1"/>
<dbReference type="PhosphoSitePlus" id="Q8BFX1"/>
<dbReference type="PaxDb" id="10090-ENSMUSP00000091703"/>
<dbReference type="PeptideAtlas" id="Q8BFX1"/>
<dbReference type="ProteomicsDB" id="300421"/>
<dbReference type="Pumba" id="Q8BFX1"/>
<dbReference type="DNASU" id="108660"/>
<dbReference type="GeneID" id="108660"/>
<dbReference type="KEGG" id="mmu:108660"/>
<dbReference type="UCSC" id="uc007jcq.1">
    <property type="organism name" value="mouse"/>
</dbReference>
<dbReference type="AGR" id="MGI:1914224"/>
<dbReference type="CTD" id="149603"/>
<dbReference type="MGI" id="MGI:1914224">
    <property type="gene designation" value="Rnf187"/>
</dbReference>
<dbReference type="eggNOG" id="KOG2177">
    <property type="taxonomic scope" value="Eukaryota"/>
</dbReference>
<dbReference type="InParanoid" id="Q8BFX1"/>
<dbReference type="OrthoDB" id="87037at9989"/>
<dbReference type="TreeFam" id="TF351093"/>
<dbReference type="UniPathway" id="UPA00143"/>
<dbReference type="BioGRID-ORCS" id="108660">
    <property type="hits" value="1 hit in 55 CRISPR screens"/>
</dbReference>
<dbReference type="ChiTaRS" id="Rnf187">
    <property type="organism name" value="mouse"/>
</dbReference>
<dbReference type="PRO" id="PR:Q8BFX1"/>
<dbReference type="Proteomes" id="UP000000589">
    <property type="component" value="Unplaced"/>
</dbReference>
<dbReference type="RNAct" id="Q8BFX1">
    <property type="molecule type" value="protein"/>
</dbReference>
<dbReference type="GO" id="GO:0005737">
    <property type="term" value="C:cytoplasm"/>
    <property type="evidence" value="ECO:0000250"/>
    <property type="project" value="UniProtKB"/>
</dbReference>
<dbReference type="GO" id="GO:0005634">
    <property type="term" value="C:nucleus"/>
    <property type="evidence" value="ECO:0000250"/>
    <property type="project" value="UniProtKB"/>
</dbReference>
<dbReference type="GO" id="GO:0004842">
    <property type="term" value="F:ubiquitin-protein transferase activity"/>
    <property type="evidence" value="ECO:0000250"/>
    <property type="project" value="UniProtKB"/>
</dbReference>
<dbReference type="GO" id="GO:0008270">
    <property type="term" value="F:zinc ion binding"/>
    <property type="evidence" value="ECO:0007669"/>
    <property type="project" value="UniProtKB-KW"/>
</dbReference>
<dbReference type="GO" id="GO:0008284">
    <property type="term" value="P:positive regulation of cell population proliferation"/>
    <property type="evidence" value="ECO:0000315"/>
    <property type="project" value="UniProtKB"/>
</dbReference>
<dbReference type="GO" id="GO:0045893">
    <property type="term" value="P:positive regulation of DNA-templated transcription"/>
    <property type="evidence" value="ECO:0000250"/>
    <property type="project" value="UniProtKB"/>
</dbReference>
<dbReference type="GO" id="GO:0043161">
    <property type="term" value="P:proteasome-mediated ubiquitin-dependent protein catabolic process"/>
    <property type="evidence" value="ECO:0000250"/>
    <property type="project" value="UniProtKB"/>
</dbReference>
<dbReference type="GO" id="GO:0051865">
    <property type="term" value="P:protein autoubiquitination"/>
    <property type="evidence" value="ECO:0000250"/>
    <property type="project" value="UniProtKB"/>
</dbReference>
<dbReference type="GO" id="GO:0070936">
    <property type="term" value="P:protein K48-linked ubiquitination"/>
    <property type="evidence" value="ECO:0000250"/>
    <property type="project" value="UniProtKB"/>
</dbReference>
<dbReference type="CDD" id="cd16601">
    <property type="entry name" value="RING-HC_TRIM39_C-IV"/>
    <property type="match status" value="1"/>
</dbReference>
<dbReference type="FunFam" id="3.30.40.10:FF:000935">
    <property type="entry name" value="E3 ubiquitin-protein ligase RNF187"/>
    <property type="match status" value="1"/>
</dbReference>
<dbReference type="Gene3D" id="3.30.40.10">
    <property type="entry name" value="Zinc/RING finger domain, C3HC4 (zinc finger)"/>
    <property type="match status" value="1"/>
</dbReference>
<dbReference type="InterPro" id="IPR050143">
    <property type="entry name" value="TRIM/RBCC"/>
</dbReference>
<dbReference type="InterPro" id="IPR001841">
    <property type="entry name" value="Znf_RING"/>
</dbReference>
<dbReference type="InterPro" id="IPR013083">
    <property type="entry name" value="Znf_RING/FYVE/PHD"/>
</dbReference>
<dbReference type="InterPro" id="IPR017907">
    <property type="entry name" value="Znf_RING_CS"/>
</dbReference>
<dbReference type="PANTHER" id="PTHR24103">
    <property type="entry name" value="E3 UBIQUITIN-PROTEIN LIGASE TRIM"/>
    <property type="match status" value="1"/>
</dbReference>
<dbReference type="Pfam" id="PF15227">
    <property type="entry name" value="zf-C3HC4_4"/>
    <property type="match status" value="1"/>
</dbReference>
<dbReference type="SMART" id="SM00184">
    <property type="entry name" value="RING"/>
    <property type="match status" value="1"/>
</dbReference>
<dbReference type="SUPFAM" id="SSF57850">
    <property type="entry name" value="RING/U-box"/>
    <property type="match status" value="1"/>
</dbReference>
<dbReference type="PROSITE" id="PS00518">
    <property type="entry name" value="ZF_RING_1"/>
    <property type="match status" value="1"/>
</dbReference>
<dbReference type="PROSITE" id="PS50089">
    <property type="entry name" value="ZF_RING_2"/>
    <property type="match status" value="1"/>
</dbReference>
<sequence length="236" mass="26313">MALPAGPADAICALCQRAPREPVRADCGHRFCRACVVRFWAEEDGPFPCPECADDCWQRAVEPSRPPLSRRLLALEEAAAAPARDGPASEAALQLLCRADGDPLCSACRMAAGPEPPEWEPRWRKALRGKENKGSVEIMRKDLNDARDLHGQAESAAAVWKGHVMDRRKKALTDYKKLRAFFVEEEEHFLQEAEKDEGASEDDELADPADRFRSLLQAVSELEKKHRNLGLSMLLQ</sequence>
<keyword id="KW-0963">Cytoplasm</keyword>
<keyword id="KW-1017">Isopeptide bond</keyword>
<keyword id="KW-0479">Metal-binding</keyword>
<keyword id="KW-0488">Methylation</keyword>
<keyword id="KW-0539">Nucleus</keyword>
<keyword id="KW-0597">Phosphoprotein</keyword>
<keyword id="KW-1185">Reference proteome</keyword>
<keyword id="KW-0808">Transferase</keyword>
<keyword id="KW-0832">Ubl conjugation</keyword>
<keyword id="KW-0833">Ubl conjugation pathway</keyword>
<keyword id="KW-0862">Zinc</keyword>
<keyword id="KW-0863">Zinc-finger</keyword>
<proteinExistence type="evidence at protein level"/>
<comment type="function">
    <text evidence="3">E3 ubiquitin-protein ligase that acts as a coactivator of JUN-mediated gene activation in response to growth factor signaling via the MAP3K1 pathway, independently from MAPK8.</text>
</comment>
<comment type="catalytic activity">
    <reaction>
        <text>S-ubiquitinyl-[E2 ubiquitin-conjugating enzyme]-L-cysteine + [acceptor protein]-L-lysine = [E2 ubiquitin-conjugating enzyme]-L-cysteine + N(6)-ubiquitinyl-[acceptor protein]-L-lysine.</text>
        <dbReference type="EC" id="2.3.2.27"/>
    </reaction>
</comment>
<comment type="pathway">
    <text>Protein modification; protein ubiquitination.</text>
</comment>
<comment type="subunit">
    <text evidence="3 5">Homodimer (By similarity). Interacts with JUN, independently of JUN phosphorylation (PubMed:20852630). Interacts (via C-terminus) with TRIM7 (By similarity).</text>
</comment>
<comment type="subcellular location">
    <subcellularLocation>
        <location evidence="3">Cytoplasm</location>
    </subcellularLocation>
    <subcellularLocation>
        <location evidence="3">Nucleus</location>
    </subcellularLocation>
    <text evidence="3">Shuttles between the cytoplasm and the nucleus.</text>
</comment>
<comment type="domain">
    <text evidence="1">The RING-type zinc finger domain is required for E3 ligase activity.</text>
</comment>
<comment type="PTM">
    <text evidence="3">Ubiquitinated; undergoes 'Lys-48'-linked autoubiquitination in the absence of growth factors and MAP3K1-induced 'Lys-63'-linked polyubiquitination. 'Lys-48'-autoubiquitination leads to degradation by the proteasome, while MAP3K1-induced 'Lys-63'-linked polyubiquitination results in the stabilization of the protein. 'Lys-48'- and 'Lys-63'-linked polyubiquitinations occur most probably on the same 3 C-terminal lysine residues (Lys-195, Lys-224 and Lys-225) and are thus mutually exclusive. Other sites of ubiquitination are not excluded. 'Lys-63'-linked polyubiquitination by TRIM7 in response to growth factor signaling via the MEK/ERK pathway enhances protein stability.</text>
</comment>
<comment type="PTM">
    <text evidence="3">Arginine methylation by PRMT1 stabilizes RNF187 by facilitating K63-linked ubiquitin chain formation, and enables dimerization, c-Jun interaction and subsequent AP1 target gene expression.</text>
</comment>
<comment type="caution">
    <text evidence="7">This sequence initiates at a CTG codon.</text>
</comment>
<comment type="sequence caution" evidence="6">
    <conflict type="erroneous initiation">
        <sequence resource="EMBL-CDS" id="AAH96522"/>
    </conflict>
    <text>Extended N-terminus.</text>
</comment>
<comment type="sequence caution" evidence="6">
    <conflict type="miscellaneous discrepancy">
        <sequence resource="EMBL-CDS" id="AAH96522"/>
    </conflict>
    <text>Unusual initiator. The initiator methionine is coded by a non-canonical CTG leucine codon.</text>
</comment>
<comment type="sequence caution" evidence="6">
    <conflict type="erroneous initiation">
        <sequence resource="EMBL-CDS" id="BAA92754"/>
    </conflict>
    <text>Extended N-terminus.</text>
</comment>
<comment type="sequence caution" evidence="6">
    <conflict type="miscellaneous discrepancy">
        <sequence resource="EMBL-CDS" id="BAA92754"/>
    </conflict>
    <text>Unusual initiator. The initiator methionine is coded by a non-canonical CTG leucine codon.</text>
</comment>
<comment type="sequence caution" evidence="6">
    <conflict type="erroneous initiation">
        <sequence resource="EMBL-CDS" id="BAC29916"/>
    </conflict>
    <text>Extended N-terminus.</text>
</comment>
<comment type="sequence caution" evidence="6">
    <conflict type="miscellaneous discrepancy">
        <sequence resource="EMBL-CDS" id="BAC29916"/>
    </conflict>
    <text>Unusual initiator. The initiator methionine is coded by a non-canonical CTG leucine codon.</text>
</comment>
<comment type="sequence caution" evidence="6">
    <conflict type="erroneous initiation">
        <sequence resource="EMBL-CDS" id="BAC40679"/>
    </conflict>
    <text>Extended N-terminus.</text>
</comment>
<comment type="sequence caution" evidence="6">
    <conflict type="miscellaneous discrepancy">
        <sequence resource="EMBL-CDS" id="BAC40679"/>
    </conflict>
    <text>Unusual initiator. The initiator methionine is coded by a non-canonical CTG leucine codon.</text>
</comment>
<accession>Q8BFX1</accession>
<accession>Q4VA64</accession>
<accession>Q8C2B0</accession>
<accession>Q8CAS0</accession>
<accession>Q9JMF6</accession>
<protein>
    <recommendedName>
        <fullName>E3 ubiquitin-protein ligase RNF187</fullName>
        <ecNumber>2.3.2.27</ecNumber>
    </recommendedName>
    <alternativeName>
        <fullName>RING domain AP1 coactivator 1</fullName>
        <shortName>RACO-1</shortName>
    </alternativeName>
    <alternativeName>
        <fullName>RING finger protein 187</fullName>
    </alternativeName>
    <alternativeName>
        <fullName evidence="6">RING-type E3 ubiquitin transferase RNF187</fullName>
    </alternativeName>
</protein>
<gene>
    <name type="primary">Rnf187</name>
</gene>
<reference key="1">
    <citation type="journal article" date="2000" name="Biochem. Biophys. Res. Commun.">
        <title>Growth suppression of Escherichia coli by induction of expression of mammalian genes with transmembrane or ATPase domains.</title>
        <authorList>
            <person name="Inoue S."/>
            <person name="Sano H."/>
            <person name="Ohta M."/>
        </authorList>
    </citation>
    <scope>NUCLEOTIDE SEQUENCE [MRNA]</scope>
    <source>
        <tissue>Brain</tissue>
    </source>
</reference>
<reference key="2">
    <citation type="journal article" date="2005" name="Science">
        <title>The transcriptional landscape of the mammalian genome.</title>
        <authorList>
            <person name="Carninci P."/>
            <person name="Kasukawa T."/>
            <person name="Katayama S."/>
            <person name="Gough J."/>
            <person name="Frith M.C."/>
            <person name="Maeda N."/>
            <person name="Oyama R."/>
            <person name="Ravasi T."/>
            <person name="Lenhard B."/>
            <person name="Wells C."/>
            <person name="Kodzius R."/>
            <person name="Shimokawa K."/>
            <person name="Bajic V.B."/>
            <person name="Brenner S.E."/>
            <person name="Batalov S."/>
            <person name="Forrest A.R."/>
            <person name="Zavolan M."/>
            <person name="Davis M.J."/>
            <person name="Wilming L.G."/>
            <person name="Aidinis V."/>
            <person name="Allen J.E."/>
            <person name="Ambesi-Impiombato A."/>
            <person name="Apweiler R."/>
            <person name="Aturaliya R.N."/>
            <person name="Bailey T.L."/>
            <person name="Bansal M."/>
            <person name="Baxter L."/>
            <person name="Beisel K.W."/>
            <person name="Bersano T."/>
            <person name="Bono H."/>
            <person name="Chalk A.M."/>
            <person name="Chiu K.P."/>
            <person name="Choudhary V."/>
            <person name="Christoffels A."/>
            <person name="Clutterbuck D.R."/>
            <person name="Crowe M.L."/>
            <person name="Dalla E."/>
            <person name="Dalrymple B.P."/>
            <person name="de Bono B."/>
            <person name="Della Gatta G."/>
            <person name="di Bernardo D."/>
            <person name="Down T."/>
            <person name="Engstrom P."/>
            <person name="Fagiolini M."/>
            <person name="Faulkner G."/>
            <person name="Fletcher C.F."/>
            <person name="Fukushima T."/>
            <person name="Furuno M."/>
            <person name="Futaki S."/>
            <person name="Gariboldi M."/>
            <person name="Georgii-Hemming P."/>
            <person name="Gingeras T.R."/>
            <person name="Gojobori T."/>
            <person name="Green R.E."/>
            <person name="Gustincich S."/>
            <person name="Harbers M."/>
            <person name="Hayashi Y."/>
            <person name="Hensch T.K."/>
            <person name="Hirokawa N."/>
            <person name="Hill D."/>
            <person name="Huminiecki L."/>
            <person name="Iacono M."/>
            <person name="Ikeo K."/>
            <person name="Iwama A."/>
            <person name="Ishikawa T."/>
            <person name="Jakt M."/>
            <person name="Kanapin A."/>
            <person name="Katoh M."/>
            <person name="Kawasawa Y."/>
            <person name="Kelso J."/>
            <person name="Kitamura H."/>
            <person name="Kitano H."/>
            <person name="Kollias G."/>
            <person name="Krishnan S.P."/>
            <person name="Kruger A."/>
            <person name="Kummerfeld S.K."/>
            <person name="Kurochkin I.V."/>
            <person name="Lareau L.F."/>
            <person name="Lazarevic D."/>
            <person name="Lipovich L."/>
            <person name="Liu J."/>
            <person name="Liuni S."/>
            <person name="McWilliam S."/>
            <person name="Madan Babu M."/>
            <person name="Madera M."/>
            <person name="Marchionni L."/>
            <person name="Matsuda H."/>
            <person name="Matsuzawa S."/>
            <person name="Miki H."/>
            <person name="Mignone F."/>
            <person name="Miyake S."/>
            <person name="Morris K."/>
            <person name="Mottagui-Tabar S."/>
            <person name="Mulder N."/>
            <person name="Nakano N."/>
            <person name="Nakauchi H."/>
            <person name="Ng P."/>
            <person name="Nilsson R."/>
            <person name="Nishiguchi S."/>
            <person name="Nishikawa S."/>
            <person name="Nori F."/>
            <person name="Ohara O."/>
            <person name="Okazaki Y."/>
            <person name="Orlando V."/>
            <person name="Pang K.C."/>
            <person name="Pavan W.J."/>
            <person name="Pavesi G."/>
            <person name="Pesole G."/>
            <person name="Petrovsky N."/>
            <person name="Piazza S."/>
            <person name="Reed J."/>
            <person name="Reid J.F."/>
            <person name="Ring B.Z."/>
            <person name="Ringwald M."/>
            <person name="Rost B."/>
            <person name="Ruan Y."/>
            <person name="Salzberg S.L."/>
            <person name="Sandelin A."/>
            <person name="Schneider C."/>
            <person name="Schoenbach C."/>
            <person name="Sekiguchi K."/>
            <person name="Semple C.A."/>
            <person name="Seno S."/>
            <person name="Sessa L."/>
            <person name="Sheng Y."/>
            <person name="Shibata Y."/>
            <person name="Shimada H."/>
            <person name="Shimada K."/>
            <person name="Silva D."/>
            <person name="Sinclair B."/>
            <person name="Sperling S."/>
            <person name="Stupka E."/>
            <person name="Sugiura K."/>
            <person name="Sultana R."/>
            <person name="Takenaka Y."/>
            <person name="Taki K."/>
            <person name="Tammoja K."/>
            <person name="Tan S.L."/>
            <person name="Tang S."/>
            <person name="Taylor M.S."/>
            <person name="Tegner J."/>
            <person name="Teichmann S.A."/>
            <person name="Ueda H.R."/>
            <person name="van Nimwegen E."/>
            <person name="Verardo R."/>
            <person name="Wei C.L."/>
            <person name="Yagi K."/>
            <person name="Yamanishi H."/>
            <person name="Zabarovsky E."/>
            <person name="Zhu S."/>
            <person name="Zimmer A."/>
            <person name="Hide W."/>
            <person name="Bult C."/>
            <person name="Grimmond S.M."/>
            <person name="Teasdale R.D."/>
            <person name="Liu E.T."/>
            <person name="Brusic V."/>
            <person name="Quackenbush J."/>
            <person name="Wahlestedt C."/>
            <person name="Mattick J.S."/>
            <person name="Hume D.A."/>
            <person name="Kai C."/>
            <person name="Sasaki D."/>
            <person name="Tomaru Y."/>
            <person name="Fukuda S."/>
            <person name="Kanamori-Katayama M."/>
            <person name="Suzuki M."/>
            <person name="Aoki J."/>
            <person name="Arakawa T."/>
            <person name="Iida J."/>
            <person name="Imamura K."/>
            <person name="Itoh M."/>
            <person name="Kato T."/>
            <person name="Kawaji H."/>
            <person name="Kawagashira N."/>
            <person name="Kawashima T."/>
            <person name="Kojima M."/>
            <person name="Kondo S."/>
            <person name="Konno H."/>
            <person name="Nakano K."/>
            <person name="Ninomiya N."/>
            <person name="Nishio T."/>
            <person name="Okada M."/>
            <person name="Plessy C."/>
            <person name="Shibata K."/>
            <person name="Shiraki T."/>
            <person name="Suzuki S."/>
            <person name="Tagami M."/>
            <person name="Waki K."/>
            <person name="Watahiki A."/>
            <person name="Okamura-Oho Y."/>
            <person name="Suzuki H."/>
            <person name="Kawai J."/>
            <person name="Hayashizaki Y."/>
        </authorList>
    </citation>
    <scope>NUCLEOTIDE SEQUENCE [LARGE SCALE MRNA]</scope>
    <source>
        <strain>C57BL/6J</strain>
        <strain>NOD</strain>
        <tissue>Head</tissue>
        <tissue>Thymus</tissue>
    </source>
</reference>
<reference key="3">
    <citation type="journal article" date="2009" name="PLoS Biol.">
        <title>Lineage-specific biology revealed by a finished genome assembly of the mouse.</title>
        <authorList>
            <person name="Church D.M."/>
            <person name="Goodstadt L."/>
            <person name="Hillier L.W."/>
            <person name="Zody M.C."/>
            <person name="Goldstein S."/>
            <person name="She X."/>
            <person name="Bult C.J."/>
            <person name="Agarwala R."/>
            <person name="Cherry J.L."/>
            <person name="DiCuccio M."/>
            <person name="Hlavina W."/>
            <person name="Kapustin Y."/>
            <person name="Meric P."/>
            <person name="Maglott D."/>
            <person name="Birtle Z."/>
            <person name="Marques A.C."/>
            <person name="Graves T."/>
            <person name="Zhou S."/>
            <person name="Teague B."/>
            <person name="Potamousis K."/>
            <person name="Churas C."/>
            <person name="Place M."/>
            <person name="Herschleb J."/>
            <person name="Runnheim R."/>
            <person name="Forrest D."/>
            <person name="Amos-Landgraf J."/>
            <person name="Schwartz D.C."/>
            <person name="Cheng Z."/>
            <person name="Lindblad-Toh K."/>
            <person name="Eichler E.E."/>
            <person name="Ponting C.P."/>
        </authorList>
    </citation>
    <scope>NUCLEOTIDE SEQUENCE [LARGE SCALE GENOMIC DNA]</scope>
    <source>
        <strain>C57BL/6J</strain>
    </source>
</reference>
<reference key="4">
    <citation type="journal article" date="2004" name="Genome Res.">
        <title>The status, quality, and expansion of the NIH full-length cDNA project: the Mammalian Gene Collection (MGC).</title>
        <authorList>
            <consortium name="The MGC Project Team"/>
        </authorList>
    </citation>
    <scope>NUCLEOTIDE SEQUENCE [LARGE SCALE MRNA]</scope>
    <source>
        <strain>C57BL/6J</strain>
        <tissue>Brain</tissue>
    </source>
</reference>
<reference key="5">
    <citation type="journal article" date="2010" name="Nat. Cell Biol.">
        <title>Identification of a co-activator that links growth factor signalling to c-Jun/AP-1 activation.</title>
        <authorList>
            <person name="Davies C.C."/>
            <person name="Chakraborty A."/>
            <person name="Cipriani F."/>
            <person name="Haigh K."/>
            <person name="Haigh J.J."/>
            <person name="Behrens A."/>
        </authorList>
    </citation>
    <scope>INTERACTION WITH JUN</scope>
</reference>
<name>RN187_MOUSE</name>
<evidence type="ECO:0000250" key="1"/>
<evidence type="ECO:0000250" key="2">
    <source>
        <dbReference type="UniProtKB" id="D3Z8N2"/>
    </source>
</evidence>
<evidence type="ECO:0000250" key="3">
    <source>
        <dbReference type="UniProtKB" id="Q5TA31"/>
    </source>
</evidence>
<evidence type="ECO:0000255" key="4">
    <source>
        <dbReference type="PROSITE-ProRule" id="PRU00175"/>
    </source>
</evidence>
<evidence type="ECO:0000269" key="5">
    <source>
    </source>
</evidence>
<evidence type="ECO:0000305" key="6"/>
<evidence type="ECO:0000305" key="7">
    <source>
    </source>
</evidence>
<organism>
    <name type="scientific">Mus musculus</name>
    <name type="common">Mouse</name>
    <dbReference type="NCBI Taxonomy" id="10090"/>
    <lineage>
        <taxon>Eukaryota</taxon>
        <taxon>Metazoa</taxon>
        <taxon>Chordata</taxon>
        <taxon>Craniata</taxon>
        <taxon>Vertebrata</taxon>
        <taxon>Euteleostomi</taxon>
        <taxon>Mammalia</taxon>
        <taxon>Eutheria</taxon>
        <taxon>Euarchontoglires</taxon>
        <taxon>Glires</taxon>
        <taxon>Rodentia</taxon>
        <taxon>Myomorpha</taxon>
        <taxon>Muroidea</taxon>
        <taxon>Muridae</taxon>
        <taxon>Murinae</taxon>
        <taxon>Mus</taxon>
        <taxon>Mus</taxon>
    </lineage>
</organism>
<feature type="chain" id="PRO_0000278242" description="E3 ubiquitin-protein ligase RNF187">
    <location>
        <begin position="1"/>
        <end position="236"/>
    </location>
</feature>
<feature type="zinc finger region" description="RING-type" evidence="4">
    <location>
        <begin position="12"/>
        <end position="53"/>
    </location>
</feature>
<feature type="modified residue" description="Asymmetric dimethylarginine; by PRMT1" evidence="3">
    <location>
        <position position="98"/>
    </location>
</feature>
<feature type="modified residue" description="Asymmetric dimethylarginine; by PRMT1" evidence="3">
    <location>
        <position position="109"/>
    </location>
</feature>
<feature type="modified residue" description="Phosphoserine" evidence="2">
    <location>
        <position position="200"/>
    </location>
</feature>
<feature type="cross-link" description="Glycyl lysine isopeptide (Lys-Gly) (interchain with G-Cter in ubiquitin)" evidence="3">
    <location>
        <position position="195"/>
    </location>
</feature>
<feature type="cross-link" description="Glycyl lysine isopeptide (Lys-Gly) (interchain with G-Cter in ubiquitin)" evidence="3">
    <location>
        <position position="224"/>
    </location>
</feature>
<feature type="cross-link" description="Glycyl lysine isopeptide (Lys-Gly) (interchain with G-Cter in ubiquitin)" evidence="3">
    <location>
        <position position="225"/>
    </location>
</feature>